<proteinExistence type="inferred from homology"/>
<comment type="function">
    <text evidence="1">Pyridoxal kinase involved in the salvage pathway of pyridoxal 5'-phosphate (PLP). Catalyzes the phosphorylation of pyridoxal to PLP.</text>
</comment>
<comment type="catalytic activity">
    <reaction evidence="1">
        <text>pyridoxal + ATP = pyridoxal 5'-phosphate + ADP + H(+)</text>
        <dbReference type="Rhea" id="RHEA:10224"/>
        <dbReference type="ChEBI" id="CHEBI:15378"/>
        <dbReference type="ChEBI" id="CHEBI:17310"/>
        <dbReference type="ChEBI" id="CHEBI:30616"/>
        <dbReference type="ChEBI" id="CHEBI:456216"/>
        <dbReference type="ChEBI" id="CHEBI:597326"/>
        <dbReference type="EC" id="2.7.1.35"/>
    </reaction>
</comment>
<comment type="cofactor">
    <cofactor evidence="1">
        <name>Mg(2+)</name>
        <dbReference type="ChEBI" id="CHEBI:18420"/>
    </cofactor>
</comment>
<comment type="pathway">
    <text evidence="1">Cofactor metabolism; pyridoxal 5'-phosphate salvage; pyridoxal 5'-phosphate from pyridoxal: step 1/1.</text>
</comment>
<comment type="subunit">
    <text evidence="1">Homodimer.</text>
</comment>
<comment type="similarity">
    <text evidence="1">Belongs to the pyridoxine kinase family. PdxY subfamily.</text>
</comment>
<feature type="chain" id="PRO_1000069884" description="Pyridoxal kinase PdxY">
    <location>
        <begin position="1"/>
        <end position="286"/>
    </location>
</feature>
<feature type="binding site" evidence="1">
    <location>
        <position position="9"/>
    </location>
    <ligand>
        <name>substrate</name>
    </ligand>
</feature>
<feature type="binding site" evidence="1">
    <location>
        <begin position="44"/>
        <end position="45"/>
    </location>
    <ligand>
        <name>substrate</name>
    </ligand>
</feature>
<feature type="binding site" evidence="1">
    <location>
        <position position="111"/>
    </location>
    <ligand>
        <name>ATP</name>
        <dbReference type="ChEBI" id="CHEBI:30616"/>
    </ligand>
</feature>
<feature type="binding site" evidence="1">
    <location>
        <position position="148"/>
    </location>
    <ligand>
        <name>ATP</name>
        <dbReference type="ChEBI" id="CHEBI:30616"/>
    </ligand>
</feature>
<feature type="binding site" evidence="1">
    <location>
        <position position="181"/>
    </location>
    <ligand>
        <name>ATP</name>
        <dbReference type="ChEBI" id="CHEBI:30616"/>
    </ligand>
</feature>
<feature type="binding site" evidence="1">
    <location>
        <position position="222"/>
    </location>
    <ligand>
        <name>substrate</name>
    </ligand>
</feature>
<gene>
    <name evidence="1" type="primary">pdxY</name>
    <name type="ordered locus">APL_1485</name>
</gene>
<organism>
    <name type="scientific">Actinobacillus pleuropneumoniae serotype 5b (strain L20)</name>
    <dbReference type="NCBI Taxonomy" id="416269"/>
    <lineage>
        <taxon>Bacteria</taxon>
        <taxon>Pseudomonadati</taxon>
        <taxon>Pseudomonadota</taxon>
        <taxon>Gammaproteobacteria</taxon>
        <taxon>Pasteurellales</taxon>
        <taxon>Pasteurellaceae</taxon>
        <taxon>Actinobacillus</taxon>
    </lineage>
</organism>
<sequence length="286" mass="31505">MKNILSIQSHVVYGYAGNKSATFPMQLLGVDVWALNTVQFSNHTQYGKWKGIVMPKEQIGEIIQGIDEIGELAKCDAVLSGYIGSAEQVTEIVNAFHTVKSRNPNAIYLCDPVMGHPDKGRIVADGVKEGLIKQAMAHADIITPNLVELRELSGLRVENFEQAIEAVKVILTKGPKKVLVKHLSKVGKQADKFEMFFATEEGIWHISRPLYQFDKEPVGVGDLTAGLFLANLLNGKSDIEAFEHTANAVNDVMEVTANSGVYELQIIAAREFILTPRSQYKAIKIV</sequence>
<protein>
    <recommendedName>
        <fullName evidence="1">Pyridoxal kinase PdxY</fullName>
        <shortName evidence="1">PL kinase</shortName>
        <ecNumber evidence="1">2.7.1.35</ecNumber>
    </recommendedName>
</protein>
<keyword id="KW-0067">ATP-binding</keyword>
<keyword id="KW-0418">Kinase</keyword>
<keyword id="KW-0460">Magnesium</keyword>
<keyword id="KW-0547">Nucleotide-binding</keyword>
<keyword id="KW-1185">Reference proteome</keyword>
<keyword id="KW-0808">Transferase</keyword>
<evidence type="ECO:0000255" key="1">
    <source>
        <dbReference type="HAMAP-Rule" id="MF_01639"/>
    </source>
</evidence>
<accession>A3N2D3</accession>
<reference key="1">
    <citation type="journal article" date="2008" name="J. Bacteriol.">
        <title>The complete genome sequence of Actinobacillus pleuropneumoniae L20 (serotype 5b).</title>
        <authorList>
            <person name="Foote S.J."/>
            <person name="Bosse J.T."/>
            <person name="Bouevitch A.B."/>
            <person name="Langford P.R."/>
            <person name="Young N.M."/>
            <person name="Nash J.H.E."/>
        </authorList>
    </citation>
    <scope>NUCLEOTIDE SEQUENCE [LARGE SCALE GENOMIC DNA]</scope>
    <source>
        <strain>L20</strain>
    </source>
</reference>
<name>PDXY_ACTP2</name>
<dbReference type="EC" id="2.7.1.35" evidence="1"/>
<dbReference type="EMBL" id="CP000569">
    <property type="protein sequence ID" value="ABN74569.1"/>
    <property type="molecule type" value="Genomic_DNA"/>
</dbReference>
<dbReference type="RefSeq" id="WP_011848604.1">
    <property type="nucleotide sequence ID" value="NC_009053.1"/>
</dbReference>
<dbReference type="SMR" id="A3N2D3"/>
<dbReference type="STRING" id="416269.APL_1485"/>
<dbReference type="EnsemblBacteria" id="ABN74569">
    <property type="protein sequence ID" value="ABN74569"/>
    <property type="gene ID" value="APL_1485"/>
</dbReference>
<dbReference type="KEGG" id="apl:APL_1485"/>
<dbReference type="PATRIC" id="fig|416269.6.peg.1546"/>
<dbReference type="eggNOG" id="COG2240">
    <property type="taxonomic scope" value="Bacteria"/>
</dbReference>
<dbReference type="HOGENOM" id="CLU_046496_3_0_6"/>
<dbReference type="UniPathway" id="UPA01068">
    <property type="reaction ID" value="UER00298"/>
</dbReference>
<dbReference type="Proteomes" id="UP000001432">
    <property type="component" value="Chromosome"/>
</dbReference>
<dbReference type="GO" id="GO:0005829">
    <property type="term" value="C:cytosol"/>
    <property type="evidence" value="ECO:0007669"/>
    <property type="project" value="TreeGrafter"/>
</dbReference>
<dbReference type="GO" id="GO:0005524">
    <property type="term" value="F:ATP binding"/>
    <property type="evidence" value="ECO:0007669"/>
    <property type="project" value="UniProtKB-UniRule"/>
</dbReference>
<dbReference type="GO" id="GO:0000287">
    <property type="term" value="F:magnesium ion binding"/>
    <property type="evidence" value="ECO:0007669"/>
    <property type="project" value="UniProtKB-UniRule"/>
</dbReference>
<dbReference type="GO" id="GO:0008478">
    <property type="term" value="F:pyridoxal kinase activity"/>
    <property type="evidence" value="ECO:0007669"/>
    <property type="project" value="UniProtKB-UniRule"/>
</dbReference>
<dbReference type="GO" id="GO:0009443">
    <property type="term" value="P:pyridoxal 5'-phosphate salvage"/>
    <property type="evidence" value="ECO:0007669"/>
    <property type="project" value="UniProtKB-UniRule"/>
</dbReference>
<dbReference type="CDD" id="cd01173">
    <property type="entry name" value="pyridoxal_pyridoxamine_kinase"/>
    <property type="match status" value="1"/>
</dbReference>
<dbReference type="FunFam" id="3.40.1190.20:FF:000008">
    <property type="entry name" value="Pyridoxal kinase PdxY"/>
    <property type="match status" value="1"/>
</dbReference>
<dbReference type="Gene3D" id="3.40.1190.20">
    <property type="match status" value="1"/>
</dbReference>
<dbReference type="HAMAP" id="MF_01639">
    <property type="entry name" value="PdxY"/>
    <property type="match status" value="1"/>
</dbReference>
<dbReference type="InterPro" id="IPR013749">
    <property type="entry name" value="PM/HMP-P_kinase-1"/>
</dbReference>
<dbReference type="InterPro" id="IPR004625">
    <property type="entry name" value="PyrdxlKinase"/>
</dbReference>
<dbReference type="InterPro" id="IPR023685">
    <property type="entry name" value="Pyridoxal_kinase_PdxY"/>
</dbReference>
<dbReference type="InterPro" id="IPR029056">
    <property type="entry name" value="Ribokinase-like"/>
</dbReference>
<dbReference type="NCBIfam" id="NF004398">
    <property type="entry name" value="PRK05756.1"/>
    <property type="match status" value="1"/>
</dbReference>
<dbReference type="NCBIfam" id="TIGR00687">
    <property type="entry name" value="pyridox_kin"/>
    <property type="match status" value="1"/>
</dbReference>
<dbReference type="PANTHER" id="PTHR10534">
    <property type="entry name" value="PYRIDOXAL KINASE"/>
    <property type="match status" value="1"/>
</dbReference>
<dbReference type="PANTHER" id="PTHR10534:SF2">
    <property type="entry name" value="PYRIDOXAL KINASE"/>
    <property type="match status" value="1"/>
</dbReference>
<dbReference type="Pfam" id="PF08543">
    <property type="entry name" value="Phos_pyr_kin"/>
    <property type="match status" value="1"/>
</dbReference>
<dbReference type="SUPFAM" id="SSF53613">
    <property type="entry name" value="Ribokinase-like"/>
    <property type="match status" value="1"/>
</dbReference>